<protein>
    <recommendedName>
        <fullName>Protein Nef</fullName>
    </recommendedName>
    <alternativeName>
        <fullName>3'ORF</fullName>
    </alternativeName>
    <alternativeName>
        <fullName>Negative factor</fullName>
        <shortName>F-protein</shortName>
    </alternativeName>
</protein>
<gene>
    <name type="primary">nef</name>
</gene>
<evidence type="ECO:0000250" key="1"/>
<evidence type="ECO:0000256" key="2">
    <source>
        <dbReference type="SAM" id="MobiDB-lite"/>
    </source>
</evidence>
<evidence type="ECO:0000305" key="3"/>
<name>NEF_HV2D1</name>
<feature type="initiator methionine" description="Removed; by host" evidence="1">
    <location>
        <position position="1"/>
    </location>
</feature>
<feature type="chain" id="PRO_0000085229" description="Protein Nef">
    <location>
        <begin position="2"/>
        <end position="257"/>
    </location>
</feature>
<feature type="region of interest" description="Disordered" evidence="2">
    <location>
        <begin position="1"/>
        <end position="70"/>
    </location>
</feature>
<feature type="region of interest" description="Acidic">
    <location>
        <begin position="88"/>
        <end position="96"/>
    </location>
</feature>
<feature type="region of interest" description="Mediates dimerization" evidence="1">
    <location>
        <begin position="140"/>
        <end position="156"/>
    </location>
</feature>
<feature type="short sequence motif" description="PxxP">
    <location>
        <begin position="104"/>
        <end position="107"/>
    </location>
</feature>
<feature type="compositionally biased region" description="Basic residues" evidence="2">
    <location>
        <begin position="1"/>
        <end position="10"/>
    </location>
</feature>
<feature type="compositionally biased region" description="Basic and acidic residues" evidence="2">
    <location>
        <begin position="11"/>
        <end position="21"/>
    </location>
</feature>
<feature type="compositionally biased region" description="Low complexity" evidence="2">
    <location>
        <begin position="35"/>
        <end position="45"/>
    </location>
</feature>
<feature type="compositionally biased region" description="Polar residues" evidence="2">
    <location>
        <begin position="53"/>
        <end position="65"/>
    </location>
</feature>
<feature type="lipid moiety-binding region" description="N-myristoyl glycine; by host" evidence="1">
    <location>
        <position position="2"/>
    </location>
</feature>
<sequence>MGASGSKKRSEHSQGLRERLLRARGGGYVKQRNASGGESSQSQEGSGREQKSPSCEGQQYQQGEFMNTPWRTPAAIGQKNSYKQQNMDDVDSDDDDLVGVPVMPRVPLREMTYKLAIDMSHFIKEKGGLEGIFYSRERHRILDLFLEKEEGIIPDWQNYTHGPGTRYPMYFGWLWKLVPVDISQEAEEVETNCLVHPAQTSRYDDEHGETLVWRFDPMLAYSYKAFILHPEEFGHKSGLPEKEWKAKLKARGIPYSE</sequence>
<reference key="1">
    <citation type="journal article" date="1989" name="Proc. Natl. Acad. Sci. U.S.A.">
        <title>Molecular cloning of two west African human immunodeficiency virus type 2 isolates that replicate well in macrophages: a Gambian isolate, from a patient with neurologic acquired immunodeficiency syndrome, and a highly divergent Ghanian isolate.</title>
        <authorList>
            <person name="Kuehnel H."/>
            <person name="von Briesen H."/>
            <person name="Dietrich U."/>
            <person name="Adamski M."/>
            <person name="Mix D."/>
            <person name="Biesert L."/>
            <person name="Kreutz R."/>
            <person name="Immelmann A."/>
            <person name="Henco K."/>
            <person name="Meichsner C."/>
            <person name="Andreesen R."/>
            <person name="Gelderblom H."/>
            <person name="Ruebsamen-Waigmann H."/>
        </authorList>
    </citation>
    <scope>NUCLEOTIDE SEQUENCE [GENOMIC DNA]</scope>
</reference>
<reference key="2">
    <citation type="journal article" date="1990" name="Nucleic Acids Res.">
        <title>Nucleotide sequence of HIV-2D194, an isolate from a Gambian case of 'neuro-AIDS', which showed excellent growth in macrophages.</title>
        <authorList>
            <person name="Kuehnel H."/>
            <person name="Kreutz R."/>
            <person name="Ruebsamen-Waigmann H."/>
        </authorList>
    </citation>
    <scope>NUCLEOTIDE SEQUENCE [GENOMIC DNA]</scope>
</reference>
<proteinExistence type="inferred from homology"/>
<accession>P17753</accession>
<comment type="function">
    <text evidence="1">Factor of infectivity and pathogenicity, required for optimal virus replication. Alters numerous pathways of T-lymphocyte function and down-regulates immunity surface molecules in order to evade host defense and increase viral infectivity. Alters the functionality of other immunity cells, like dendritic cells, monocytes/macrophages and NK cells. One of the earliest and most abundantly expressed viral proteins (By similarity).</text>
</comment>
<comment type="function">
    <text evidence="1">In infected CD4(+) T-lymphocytes, down-regulates cell surface expression of CD4, CD28, CD3, and MHC-I or MHC-II molecules.</text>
</comment>
<comment type="function">
    <text>Interferes with TCR signaling from the cell membrane. Interacts with CD247/TCRZ (TCR zeta chain) and exert potent down-regulation of cell surface TCR/CD3 complexes.</text>
</comment>
<comment type="function">
    <text evidence="1">Plays a role in optimizing the host cell environment for viral replication without causing cell death by apoptosis. Protects the infected cells from apoptosis in order to keep them alive until the next virus generation is ready to strike (By similarity).</text>
</comment>
<comment type="function">
    <text evidence="1">Extracellular Nef protein targets CD4(+) T-lymphocytes for apoptosis by interacting with CXCR4 surface receptors.</text>
</comment>
<comment type="subunit">
    <text evidence="1">Homodimer. Interacts with host CD247/TCRZ; this interaction induces down-regulation of cell surface TCR/CD3 complexes.</text>
</comment>
<comment type="subcellular location">
    <subcellularLocation>
        <location evidence="1">Host cell membrane</location>
        <topology evidence="1">Lipid-anchor</topology>
        <orientation evidence="1">Cytoplasmic side</orientation>
    </subcellularLocation>
    <text evidence="1">Associates with the inner plasma membrane through its N-terminal domain.</text>
</comment>
<comment type="domain">
    <text evidence="1">The N-terminal domain is composed of the N-myristoyl glycine and of a cluster of positively charged amino acids. It is required for inner plasma membrane targeting of Nef and virion incorporation, and thereby for infectivity (By similarity).</text>
</comment>
<comment type="miscellaneous">
    <text>This isolate is from a Gambian case of 'neuro-AIDS'.</text>
</comment>
<comment type="similarity">
    <text evidence="3">Belongs to the lentivirus primate group Nef protein family.</text>
</comment>
<keyword id="KW-0014">AIDS</keyword>
<keyword id="KW-1032">Host cell membrane</keyword>
<keyword id="KW-1043">Host membrane</keyword>
<keyword id="KW-0945">Host-virus interaction</keyword>
<keyword id="KW-0449">Lipoprotein</keyword>
<keyword id="KW-0472">Membrane</keyword>
<keyword id="KW-0519">Myristate</keyword>
<keyword id="KW-0899">Viral immunoevasion</keyword>
<keyword id="KW-0843">Virulence</keyword>
<dbReference type="EMBL" id="J04542">
    <property type="protein sequence ID" value="AAA76848.1"/>
    <property type="molecule type" value="Genomic_DNA"/>
</dbReference>
<dbReference type="EMBL" id="X52223">
    <property type="protein sequence ID" value="CAA36472.1"/>
    <property type="molecule type" value="Genomic_DNA"/>
</dbReference>
<dbReference type="PIR" id="S12160">
    <property type="entry name" value="S12160"/>
</dbReference>
<dbReference type="SMR" id="P17753"/>
<dbReference type="Proteomes" id="UP000007422">
    <property type="component" value="Segment"/>
</dbReference>
<dbReference type="GO" id="GO:0020002">
    <property type="term" value="C:host cell plasma membrane"/>
    <property type="evidence" value="ECO:0007669"/>
    <property type="project" value="UniProtKB-SubCell"/>
</dbReference>
<dbReference type="GO" id="GO:0016020">
    <property type="term" value="C:membrane"/>
    <property type="evidence" value="ECO:0007669"/>
    <property type="project" value="UniProtKB-KW"/>
</dbReference>
<dbReference type="GO" id="GO:0005525">
    <property type="term" value="F:GTP binding"/>
    <property type="evidence" value="ECO:0007669"/>
    <property type="project" value="InterPro"/>
</dbReference>
<dbReference type="Gene3D" id="3.30.62.10">
    <property type="entry name" value="Nef Regulatory Factor"/>
    <property type="match status" value="1"/>
</dbReference>
<dbReference type="InterPro" id="IPR027481">
    <property type="entry name" value="HIV-1_Nef_core_sf"/>
</dbReference>
<dbReference type="InterPro" id="IPR001558">
    <property type="entry name" value="HIV_Nef"/>
</dbReference>
<dbReference type="Pfam" id="PF00469">
    <property type="entry name" value="F-protein"/>
    <property type="match status" value="1"/>
</dbReference>
<dbReference type="SUPFAM" id="SSF55671">
    <property type="entry name" value="Regulatory factor Nef"/>
    <property type="match status" value="1"/>
</dbReference>
<organismHost>
    <name type="scientific">Homo sapiens</name>
    <name type="common">Human</name>
    <dbReference type="NCBI Taxonomy" id="9606"/>
</organismHost>
<organism>
    <name type="scientific">Human immunodeficiency virus type 2 subtype A (isolate D194)</name>
    <name type="common">HIV-2</name>
    <dbReference type="NCBI Taxonomy" id="11713"/>
    <lineage>
        <taxon>Viruses</taxon>
        <taxon>Riboviria</taxon>
        <taxon>Pararnavirae</taxon>
        <taxon>Artverviricota</taxon>
        <taxon>Revtraviricetes</taxon>
        <taxon>Ortervirales</taxon>
        <taxon>Retroviridae</taxon>
        <taxon>Orthoretrovirinae</taxon>
        <taxon>Lentivirus</taxon>
        <taxon>Human immunodeficiency virus 2</taxon>
    </lineage>
</organism>